<feature type="chain" id="PRO_1000059083" description="Aminomethyltransferase">
    <location>
        <begin position="1"/>
        <end position="365"/>
    </location>
</feature>
<organism>
    <name type="scientific">Desulfitobacterium hafniense (strain Y51)</name>
    <dbReference type="NCBI Taxonomy" id="138119"/>
    <lineage>
        <taxon>Bacteria</taxon>
        <taxon>Bacillati</taxon>
        <taxon>Bacillota</taxon>
        <taxon>Clostridia</taxon>
        <taxon>Eubacteriales</taxon>
        <taxon>Desulfitobacteriaceae</taxon>
        <taxon>Desulfitobacterium</taxon>
    </lineage>
</organism>
<gene>
    <name evidence="1" type="primary">gcvT</name>
    <name type="ordered locus">DSY2880</name>
</gene>
<reference key="1">
    <citation type="journal article" date="2006" name="J. Bacteriol.">
        <title>Complete genome sequence of the dehalorespiring bacterium Desulfitobacterium hafniense Y51 and comparison with Dehalococcoides ethenogenes 195.</title>
        <authorList>
            <person name="Nonaka H."/>
            <person name="Keresztes G."/>
            <person name="Shinoda Y."/>
            <person name="Ikenaga Y."/>
            <person name="Abe M."/>
            <person name="Naito K."/>
            <person name="Inatomi K."/>
            <person name="Furukawa K."/>
            <person name="Inui M."/>
            <person name="Yukawa H."/>
        </authorList>
    </citation>
    <scope>NUCLEOTIDE SEQUENCE [LARGE SCALE GENOMIC DNA]</scope>
    <source>
        <strain>Y51</strain>
    </source>
</reference>
<keyword id="KW-0032">Aminotransferase</keyword>
<keyword id="KW-1185">Reference proteome</keyword>
<keyword id="KW-0808">Transferase</keyword>
<comment type="function">
    <text evidence="1">The glycine cleavage system catalyzes the degradation of glycine.</text>
</comment>
<comment type="catalytic activity">
    <reaction evidence="1">
        <text>N(6)-[(R)-S(8)-aminomethyldihydrolipoyl]-L-lysyl-[protein] + (6S)-5,6,7,8-tetrahydrofolate = N(6)-[(R)-dihydrolipoyl]-L-lysyl-[protein] + (6R)-5,10-methylene-5,6,7,8-tetrahydrofolate + NH4(+)</text>
        <dbReference type="Rhea" id="RHEA:16945"/>
        <dbReference type="Rhea" id="RHEA-COMP:10475"/>
        <dbReference type="Rhea" id="RHEA-COMP:10492"/>
        <dbReference type="ChEBI" id="CHEBI:15636"/>
        <dbReference type="ChEBI" id="CHEBI:28938"/>
        <dbReference type="ChEBI" id="CHEBI:57453"/>
        <dbReference type="ChEBI" id="CHEBI:83100"/>
        <dbReference type="ChEBI" id="CHEBI:83143"/>
        <dbReference type="EC" id="2.1.2.10"/>
    </reaction>
</comment>
<comment type="subunit">
    <text evidence="1">The glycine cleavage system is composed of four proteins: P, T, L and H.</text>
</comment>
<comment type="similarity">
    <text evidence="1">Belongs to the GcvT family.</text>
</comment>
<sequence length="365" mass="40814">MTELKRTPLYEQHRRAGAKLIDFGGWEMPVQYAGVIEEHKAVRSKAGLFDVSHMGEVELKGKDSLAFLQYLLTNDVSRIQDNQIQYSPMCTSAGGVVDDLLVYRYSREHFLLVVNAANTDKDFAWMQAQAEGFEISLENRSGDFAQLALQGPWAEKILQKLTSMDLAQINYYWFKHGEVDGVLCLISRTGYTGEDGFEIYLPPEHAPRMWERILEVGGSEGVQPIGLGARDTLRFEARLPLYGNELGPDITPLEAGLGFFVKLEKDNFIGKEALSAQKEKGVPRKLVGLEMIERGIARSHYPLQKEGKEIGFITSGSFSPTLNKNIALGLIPPEYAQIGETLDVIIRGKAVKARIIPSLFYKRQG</sequence>
<proteinExistence type="inferred from homology"/>
<dbReference type="EC" id="2.1.2.10" evidence="1"/>
<dbReference type="EMBL" id="AP008230">
    <property type="protein sequence ID" value="BAE84669.1"/>
    <property type="molecule type" value="Genomic_DNA"/>
</dbReference>
<dbReference type="RefSeq" id="WP_011460676.1">
    <property type="nucleotide sequence ID" value="NC_007907.1"/>
</dbReference>
<dbReference type="SMR" id="Q24TH3"/>
<dbReference type="STRING" id="138119.DSY2880"/>
<dbReference type="KEGG" id="dsy:DSY2880"/>
<dbReference type="eggNOG" id="COG0404">
    <property type="taxonomic scope" value="Bacteria"/>
</dbReference>
<dbReference type="HOGENOM" id="CLU_007884_10_2_9"/>
<dbReference type="Proteomes" id="UP000001946">
    <property type="component" value="Chromosome"/>
</dbReference>
<dbReference type="GO" id="GO:0005829">
    <property type="term" value="C:cytosol"/>
    <property type="evidence" value="ECO:0007669"/>
    <property type="project" value="TreeGrafter"/>
</dbReference>
<dbReference type="GO" id="GO:0005960">
    <property type="term" value="C:glycine cleavage complex"/>
    <property type="evidence" value="ECO:0007669"/>
    <property type="project" value="InterPro"/>
</dbReference>
<dbReference type="GO" id="GO:0004047">
    <property type="term" value="F:aminomethyltransferase activity"/>
    <property type="evidence" value="ECO:0007669"/>
    <property type="project" value="UniProtKB-UniRule"/>
</dbReference>
<dbReference type="GO" id="GO:0008483">
    <property type="term" value="F:transaminase activity"/>
    <property type="evidence" value="ECO:0007669"/>
    <property type="project" value="UniProtKB-KW"/>
</dbReference>
<dbReference type="GO" id="GO:0019464">
    <property type="term" value="P:glycine decarboxylation via glycine cleavage system"/>
    <property type="evidence" value="ECO:0007669"/>
    <property type="project" value="UniProtKB-UniRule"/>
</dbReference>
<dbReference type="FunFam" id="2.40.30.110:FF:000003">
    <property type="entry name" value="Aminomethyltransferase"/>
    <property type="match status" value="1"/>
</dbReference>
<dbReference type="FunFam" id="3.30.70.1400:FF:000001">
    <property type="entry name" value="Aminomethyltransferase"/>
    <property type="match status" value="1"/>
</dbReference>
<dbReference type="FunFam" id="4.10.1250.10:FF:000001">
    <property type="entry name" value="Aminomethyltransferase"/>
    <property type="match status" value="1"/>
</dbReference>
<dbReference type="Gene3D" id="2.40.30.110">
    <property type="entry name" value="Aminomethyltransferase beta-barrel domains"/>
    <property type="match status" value="1"/>
</dbReference>
<dbReference type="Gene3D" id="3.30.70.1400">
    <property type="entry name" value="Aminomethyltransferase beta-barrel domains"/>
    <property type="match status" value="1"/>
</dbReference>
<dbReference type="Gene3D" id="4.10.1250.10">
    <property type="entry name" value="Aminomethyltransferase fragment"/>
    <property type="match status" value="1"/>
</dbReference>
<dbReference type="Gene3D" id="3.30.1360.120">
    <property type="entry name" value="Probable tRNA modification gtpase trme, domain 1"/>
    <property type="match status" value="1"/>
</dbReference>
<dbReference type="HAMAP" id="MF_00259">
    <property type="entry name" value="GcvT"/>
    <property type="match status" value="1"/>
</dbReference>
<dbReference type="InterPro" id="IPR006223">
    <property type="entry name" value="GCS_T"/>
</dbReference>
<dbReference type="InterPro" id="IPR022903">
    <property type="entry name" value="GCS_T_bac"/>
</dbReference>
<dbReference type="InterPro" id="IPR013977">
    <property type="entry name" value="GCST_C"/>
</dbReference>
<dbReference type="InterPro" id="IPR006222">
    <property type="entry name" value="GCV_T_N"/>
</dbReference>
<dbReference type="InterPro" id="IPR028896">
    <property type="entry name" value="GcvT/YgfZ/DmdA"/>
</dbReference>
<dbReference type="InterPro" id="IPR029043">
    <property type="entry name" value="GcvT/YgfZ_C"/>
</dbReference>
<dbReference type="InterPro" id="IPR027266">
    <property type="entry name" value="TrmE/GcvT_dom1"/>
</dbReference>
<dbReference type="NCBIfam" id="TIGR00528">
    <property type="entry name" value="gcvT"/>
    <property type="match status" value="1"/>
</dbReference>
<dbReference type="NCBIfam" id="NF001567">
    <property type="entry name" value="PRK00389.1"/>
    <property type="match status" value="1"/>
</dbReference>
<dbReference type="PANTHER" id="PTHR43757">
    <property type="entry name" value="AMINOMETHYLTRANSFERASE"/>
    <property type="match status" value="1"/>
</dbReference>
<dbReference type="PANTHER" id="PTHR43757:SF2">
    <property type="entry name" value="AMINOMETHYLTRANSFERASE, MITOCHONDRIAL"/>
    <property type="match status" value="1"/>
</dbReference>
<dbReference type="Pfam" id="PF01571">
    <property type="entry name" value="GCV_T"/>
    <property type="match status" value="1"/>
</dbReference>
<dbReference type="Pfam" id="PF08669">
    <property type="entry name" value="GCV_T_C"/>
    <property type="match status" value="1"/>
</dbReference>
<dbReference type="PIRSF" id="PIRSF006487">
    <property type="entry name" value="GcvT"/>
    <property type="match status" value="1"/>
</dbReference>
<dbReference type="SUPFAM" id="SSF101790">
    <property type="entry name" value="Aminomethyltransferase beta-barrel domain"/>
    <property type="match status" value="1"/>
</dbReference>
<dbReference type="SUPFAM" id="SSF103025">
    <property type="entry name" value="Folate-binding domain"/>
    <property type="match status" value="1"/>
</dbReference>
<accession>Q24TH3</accession>
<name>GCST_DESHY</name>
<protein>
    <recommendedName>
        <fullName evidence="1">Aminomethyltransferase</fullName>
        <ecNumber evidence="1">2.1.2.10</ecNumber>
    </recommendedName>
    <alternativeName>
        <fullName evidence="1">Glycine cleavage system T protein</fullName>
    </alternativeName>
</protein>
<evidence type="ECO:0000255" key="1">
    <source>
        <dbReference type="HAMAP-Rule" id="MF_00259"/>
    </source>
</evidence>